<proteinExistence type="inferred from homology"/>
<dbReference type="EMBL" id="CP000448">
    <property type="protein sequence ID" value="ABI69636.1"/>
    <property type="molecule type" value="Genomic_DNA"/>
</dbReference>
<dbReference type="RefSeq" id="WP_011641720.1">
    <property type="nucleotide sequence ID" value="NC_008346.1"/>
</dbReference>
<dbReference type="SMR" id="Q0AUG8"/>
<dbReference type="STRING" id="335541.Swol_2345"/>
<dbReference type="KEGG" id="swo:Swol_2345"/>
<dbReference type="eggNOG" id="COG0081">
    <property type="taxonomic scope" value="Bacteria"/>
</dbReference>
<dbReference type="HOGENOM" id="CLU_062853_0_0_9"/>
<dbReference type="Proteomes" id="UP000001968">
    <property type="component" value="Chromosome"/>
</dbReference>
<dbReference type="GO" id="GO:0015934">
    <property type="term" value="C:large ribosomal subunit"/>
    <property type="evidence" value="ECO:0007669"/>
    <property type="project" value="InterPro"/>
</dbReference>
<dbReference type="GO" id="GO:0019843">
    <property type="term" value="F:rRNA binding"/>
    <property type="evidence" value="ECO:0007669"/>
    <property type="project" value="UniProtKB-UniRule"/>
</dbReference>
<dbReference type="GO" id="GO:0003735">
    <property type="term" value="F:structural constituent of ribosome"/>
    <property type="evidence" value="ECO:0007669"/>
    <property type="project" value="InterPro"/>
</dbReference>
<dbReference type="GO" id="GO:0000049">
    <property type="term" value="F:tRNA binding"/>
    <property type="evidence" value="ECO:0007669"/>
    <property type="project" value="UniProtKB-KW"/>
</dbReference>
<dbReference type="GO" id="GO:0006417">
    <property type="term" value="P:regulation of translation"/>
    <property type="evidence" value="ECO:0007669"/>
    <property type="project" value="UniProtKB-KW"/>
</dbReference>
<dbReference type="GO" id="GO:0006412">
    <property type="term" value="P:translation"/>
    <property type="evidence" value="ECO:0007669"/>
    <property type="project" value="UniProtKB-UniRule"/>
</dbReference>
<dbReference type="CDD" id="cd00403">
    <property type="entry name" value="Ribosomal_L1"/>
    <property type="match status" value="1"/>
</dbReference>
<dbReference type="FunFam" id="3.40.50.790:FF:000001">
    <property type="entry name" value="50S ribosomal protein L1"/>
    <property type="match status" value="1"/>
</dbReference>
<dbReference type="Gene3D" id="3.30.190.20">
    <property type="match status" value="1"/>
</dbReference>
<dbReference type="Gene3D" id="3.40.50.790">
    <property type="match status" value="1"/>
</dbReference>
<dbReference type="HAMAP" id="MF_01318_B">
    <property type="entry name" value="Ribosomal_uL1_B"/>
    <property type="match status" value="1"/>
</dbReference>
<dbReference type="InterPro" id="IPR005878">
    <property type="entry name" value="Ribosom_uL1_bac-type"/>
</dbReference>
<dbReference type="InterPro" id="IPR002143">
    <property type="entry name" value="Ribosomal_uL1"/>
</dbReference>
<dbReference type="InterPro" id="IPR023674">
    <property type="entry name" value="Ribosomal_uL1-like"/>
</dbReference>
<dbReference type="InterPro" id="IPR028364">
    <property type="entry name" value="Ribosomal_uL1/biogenesis"/>
</dbReference>
<dbReference type="InterPro" id="IPR016095">
    <property type="entry name" value="Ribosomal_uL1_3-a/b-sand"/>
</dbReference>
<dbReference type="InterPro" id="IPR023673">
    <property type="entry name" value="Ribosomal_uL1_CS"/>
</dbReference>
<dbReference type="NCBIfam" id="TIGR01169">
    <property type="entry name" value="rplA_bact"/>
    <property type="match status" value="1"/>
</dbReference>
<dbReference type="PANTHER" id="PTHR36427">
    <property type="entry name" value="54S RIBOSOMAL PROTEIN L1, MITOCHONDRIAL"/>
    <property type="match status" value="1"/>
</dbReference>
<dbReference type="PANTHER" id="PTHR36427:SF3">
    <property type="entry name" value="LARGE RIBOSOMAL SUBUNIT PROTEIN UL1M"/>
    <property type="match status" value="1"/>
</dbReference>
<dbReference type="Pfam" id="PF00687">
    <property type="entry name" value="Ribosomal_L1"/>
    <property type="match status" value="1"/>
</dbReference>
<dbReference type="PIRSF" id="PIRSF002155">
    <property type="entry name" value="Ribosomal_L1"/>
    <property type="match status" value="1"/>
</dbReference>
<dbReference type="SUPFAM" id="SSF56808">
    <property type="entry name" value="Ribosomal protein L1"/>
    <property type="match status" value="1"/>
</dbReference>
<dbReference type="PROSITE" id="PS01199">
    <property type="entry name" value="RIBOSOMAL_L1"/>
    <property type="match status" value="1"/>
</dbReference>
<evidence type="ECO:0000255" key="1">
    <source>
        <dbReference type="HAMAP-Rule" id="MF_01318"/>
    </source>
</evidence>
<evidence type="ECO:0000305" key="2"/>
<comment type="function">
    <text evidence="1">Binds directly to 23S rRNA. The L1 stalk is quite mobile in the ribosome, and is involved in E site tRNA release.</text>
</comment>
<comment type="function">
    <text evidence="1">Protein L1 is also a translational repressor protein, it controls the translation of the L11 operon by binding to its mRNA.</text>
</comment>
<comment type="subunit">
    <text evidence="1">Part of the 50S ribosomal subunit.</text>
</comment>
<comment type="similarity">
    <text evidence="1">Belongs to the universal ribosomal protein uL1 family.</text>
</comment>
<gene>
    <name evidence="1" type="primary">rplA</name>
    <name type="ordered locus">Swol_2345</name>
</gene>
<accession>Q0AUG8</accession>
<organism>
    <name type="scientific">Syntrophomonas wolfei subsp. wolfei (strain DSM 2245B / Goettingen)</name>
    <dbReference type="NCBI Taxonomy" id="335541"/>
    <lineage>
        <taxon>Bacteria</taxon>
        <taxon>Bacillati</taxon>
        <taxon>Bacillota</taxon>
        <taxon>Clostridia</taxon>
        <taxon>Eubacteriales</taxon>
        <taxon>Syntrophomonadaceae</taxon>
        <taxon>Syntrophomonas</taxon>
    </lineage>
</organism>
<keyword id="KW-1185">Reference proteome</keyword>
<keyword id="KW-0678">Repressor</keyword>
<keyword id="KW-0687">Ribonucleoprotein</keyword>
<keyword id="KW-0689">Ribosomal protein</keyword>
<keyword id="KW-0694">RNA-binding</keyword>
<keyword id="KW-0699">rRNA-binding</keyword>
<keyword id="KW-0810">Translation regulation</keyword>
<keyword id="KW-0820">tRNA-binding</keyword>
<name>RL1_SYNWW</name>
<protein>
    <recommendedName>
        <fullName evidence="1">Large ribosomal subunit protein uL1</fullName>
    </recommendedName>
    <alternativeName>
        <fullName evidence="2">50S ribosomal protein L1</fullName>
    </alternativeName>
</protein>
<feature type="chain" id="PRO_0000308133" description="Large ribosomal subunit protein uL1">
    <location>
        <begin position="1"/>
        <end position="233"/>
    </location>
</feature>
<reference key="1">
    <citation type="journal article" date="2010" name="Environ. Microbiol.">
        <title>The genome of Syntrophomonas wolfei: new insights into syntrophic metabolism and biohydrogen production.</title>
        <authorList>
            <person name="Sieber J.R."/>
            <person name="Sims D.R."/>
            <person name="Han C."/>
            <person name="Kim E."/>
            <person name="Lykidis A."/>
            <person name="Lapidus A.L."/>
            <person name="McDonnald E."/>
            <person name="Rohlin L."/>
            <person name="Culley D.E."/>
            <person name="Gunsalus R."/>
            <person name="McInerney M.J."/>
        </authorList>
    </citation>
    <scope>NUCLEOTIDE SEQUENCE [LARGE SCALE GENOMIC DNA]</scope>
    <source>
        <strain>DSM 2245B / Goettingen</strain>
    </source>
</reference>
<sequence length="233" mass="25467">MKRGKNYQQAGEKFDRLTLYEPKEALELVKEIAKAKFDETVEVHIKLGVDPRHADQQVRGTVSLPNGTGKTRKVLVFAKGEKIKEAELAGADYVGGEDLAEKIQGGWFDFDVAVATPDMMAVVGKMGKILGPRGLMPNPKAGTVTFDIERTIKELKAGRIEYRVDKSAIVHAPIGRISFEVDKLQENLNAFAEALLKARPAAAKGQYMRSVTVCSTMSPGVKINPLVLMAANK</sequence>